<proteinExistence type="predicted"/>
<dbReference type="EMBL" id="L43967">
    <property type="protein sequence ID" value="AAC71600.1"/>
    <property type="molecule type" value="Genomic_DNA"/>
</dbReference>
<dbReference type="PIR" id="C64241">
    <property type="entry name" value="C64241"/>
</dbReference>
<dbReference type="RefSeq" id="WP_009885938.1">
    <property type="nucleotide sequence ID" value="NC_000908.2"/>
</dbReference>
<dbReference type="STRING" id="243273.MG_373"/>
<dbReference type="GeneID" id="88282556"/>
<dbReference type="KEGG" id="mge:MG_373"/>
<dbReference type="eggNOG" id="COG5377">
    <property type="taxonomic scope" value="Bacteria"/>
</dbReference>
<dbReference type="HOGENOM" id="CLU_084220_0_0_14"/>
<dbReference type="InParanoid" id="P47613"/>
<dbReference type="OrthoDB" id="403948at2"/>
<dbReference type="BioCyc" id="MGEN243273:G1GJ2-467-MONOMER"/>
<dbReference type="Proteomes" id="UP000000807">
    <property type="component" value="Chromosome"/>
</dbReference>
<dbReference type="Gene3D" id="3.90.320.10">
    <property type="match status" value="1"/>
</dbReference>
<dbReference type="InterPro" id="IPR011604">
    <property type="entry name" value="PDDEXK-like_dom_sf"/>
</dbReference>
<dbReference type="InterPro" id="IPR011335">
    <property type="entry name" value="Restrct_endonuc-II-like"/>
</dbReference>
<dbReference type="InterPro" id="IPR019080">
    <property type="entry name" value="YqaJ_viral_recombinase"/>
</dbReference>
<dbReference type="NCBIfam" id="NF045868">
    <property type="entry name" value="MPN551_DNA_bnd"/>
    <property type="match status" value="1"/>
</dbReference>
<dbReference type="Pfam" id="PF09588">
    <property type="entry name" value="YqaJ"/>
    <property type="match status" value="1"/>
</dbReference>
<dbReference type="SUPFAM" id="SSF52980">
    <property type="entry name" value="Restriction endonuclease-like"/>
    <property type="match status" value="1"/>
</dbReference>
<organism>
    <name type="scientific">Mycoplasma genitalium (strain ATCC 33530 / DSM 19775 / NCTC 10195 / G37)</name>
    <name type="common">Mycoplasmoides genitalium</name>
    <dbReference type="NCBI Taxonomy" id="243273"/>
    <lineage>
        <taxon>Bacteria</taxon>
        <taxon>Bacillati</taxon>
        <taxon>Mycoplasmatota</taxon>
        <taxon>Mycoplasmoidales</taxon>
        <taxon>Mycoplasmoidaceae</taxon>
        <taxon>Mycoplasmoides</taxon>
    </lineage>
</organism>
<accession>P47613</accession>
<name>Y373_MYCGE</name>
<keyword id="KW-1185">Reference proteome</keyword>
<feature type="chain" id="PRO_0000210574" description="Uncharacterized protein MG373">
    <location>
        <begin position="1"/>
        <end position="281"/>
    </location>
</feature>
<gene>
    <name type="ordered locus">MG373</name>
</gene>
<sequence length="281" mass="32521">MGFIKQYKTDFDIVDNQIVLSEQYFLRNKALFKKITGTRFGKVLGLSEYESSFKTWANMVKIYEDEFDETLAKAGNIIEPKIRDYVNLKTGFNFHSYDPKKVQFDLFKDDSVFGGIPDGEPLDENGELAYQNDLPMLEIKTTSCDSLIYKKINGNLKMILDENGMPIVKKKDGKKDSWFDSNGKIIISTLYYCQIGLYLYLRNVNKGLFAIAFLKPEDYVLPEQFNASNREIRLIPIKIDHKGFSVLVDKARIWYENYILTGKSPKLTESDIQWLKENGIE</sequence>
<protein>
    <recommendedName>
        <fullName>Uncharacterized protein MG373</fullName>
    </recommendedName>
</protein>
<reference key="1">
    <citation type="journal article" date="1995" name="Science">
        <title>The minimal gene complement of Mycoplasma genitalium.</title>
        <authorList>
            <person name="Fraser C.M."/>
            <person name="Gocayne J.D."/>
            <person name="White O."/>
            <person name="Adams M.D."/>
            <person name="Clayton R.A."/>
            <person name="Fleischmann R.D."/>
            <person name="Bult C.J."/>
            <person name="Kerlavage A.R."/>
            <person name="Sutton G.G."/>
            <person name="Kelley J.M."/>
            <person name="Fritchman J.L."/>
            <person name="Weidman J.F."/>
            <person name="Small K.V."/>
            <person name="Sandusky M."/>
            <person name="Fuhrmann J.L."/>
            <person name="Nguyen D.T."/>
            <person name="Utterback T.R."/>
            <person name="Saudek D.M."/>
            <person name="Phillips C.A."/>
            <person name="Merrick J.M."/>
            <person name="Tomb J.-F."/>
            <person name="Dougherty B.A."/>
            <person name="Bott K.F."/>
            <person name="Hu P.-C."/>
            <person name="Lucier T.S."/>
            <person name="Peterson S.N."/>
            <person name="Smith H.O."/>
            <person name="Hutchison C.A. III"/>
            <person name="Venter J.C."/>
        </authorList>
    </citation>
    <scope>NUCLEOTIDE SEQUENCE [LARGE SCALE GENOMIC DNA]</scope>
    <source>
        <strain>ATCC 33530 / DSM 19775 / NCTC 10195 / G37</strain>
    </source>
</reference>